<keyword id="KW-0131">Cell cycle</keyword>
<keyword id="KW-0132">Cell division</keyword>
<keyword id="KW-0159">Chromosome partition</keyword>
<keyword id="KW-0963">Cytoplasm</keyword>
<keyword id="KW-0229">DNA integration</keyword>
<keyword id="KW-0233">DNA recombination</keyword>
<keyword id="KW-0238">DNA-binding</keyword>
<accession>Q1JLL7</accession>
<proteinExistence type="inferred from homology"/>
<feature type="chain" id="PRO_0000372672" description="Tyrosine recombinase XerS">
    <location>
        <begin position="1"/>
        <end position="356"/>
    </location>
</feature>
<feature type="domain" description="Core-binding (CB)" evidence="3">
    <location>
        <begin position="16"/>
        <end position="121"/>
    </location>
</feature>
<feature type="domain" description="Tyr recombinase" evidence="2">
    <location>
        <begin position="169"/>
        <end position="354"/>
    </location>
</feature>
<feature type="active site" evidence="1">
    <location>
        <position position="210"/>
    </location>
</feature>
<feature type="active site" evidence="1">
    <location>
        <position position="234"/>
    </location>
</feature>
<feature type="active site" evidence="1">
    <location>
        <position position="306"/>
    </location>
</feature>
<feature type="active site" evidence="1">
    <location>
        <position position="309"/>
    </location>
</feature>
<feature type="active site" evidence="1">
    <location>
        <position position="332"/>
    </location>
</feature>
<feature type="active site" description="O-(3'-phospho-DNA)-tyrosine intermediate" evidence="1">
    <location>
        <position position="341"/>
    </location>
</feature>
<organism>
    <name type="scientific">Streptococcus pyogenes serotype M12 (strain MGAS9429)</name>
    <dbReference type="NCBI Taxonomy" id="370551"/>
    <lineage>
        <taxon>Bacteria</taxon>
        <taxon>Bacillati</taxon>
        <taxon>Bacillota</taxon>
        <taxon>Bacilli</taxon>
        <taxon>Lactobacillales</taxon>
        <taxon>Streptococcaceae</taxon>
        <taxon>Streptococcus</taxon>
    </lineage>
</organism>
<dbReference type="EMBL" id="CP000259">
    <property type="protein sequence ID" value="ABF32202.1"/>
    <property type="status" value="ALT_INIT"/>
    <property type="molecule type" value="Genomic_DNA"/>
</dbReference>
<dbReference type="RefSeq" id="WP_044565073.1">
    <property type="nucleotide sequence ID" value="NC_008021.1"/>
</dbReference>
<dbReference type="SMR" id="Q1JLL7"/>
<dbReference type="KEGG" id="spk:MGAS9429_Spy1015"/>
<dbReference type="HOGENOM" id="CLU_027562_9_6_9"/>
<dbReference type="Proteomes" id="UP000002433">
    <property type="component" value="Chromosome"/>
</dbReference>
<dbReference type="GO" id="GO:0005737">
    <property type="term" value="C:cytoplasm"/>
    <property type="evidence" value="ECO:0007669"/>
    <property type="project" value="UniProtKB-SubCell"/>
</dbReference>
<dbReference type="GO" id="GO:0003677">
    <property type="term" value="F:DNA binding"/>
    <property type="evidence" value="ECO:0007669"/>
    <property type="project" value="UniProtKB-KW"/>
</dbReference>
<dbReference type="GO" id="GO:0009037">
    <property type="term" value="F:tyrosine-based site-specific recombinase activity"/>
    <property type="evidence" value="ECO:0007669"/>
    <property type="project" value="UniProtKB-UniRule"/>
</dbReference>
<dbReference type="GO" id="GO:0051301">
    <property type="term" value="P:cell division"/>
    <property type="evidence" value="ECO:0007669"/>
    <property type="project" value="UniProtKB-KW"/>
</dbReference>
<dbReference type="GO" id="GO:0007059">
    <property type="term" value="P:chromosome segregation"/>
    <property type="evidence" value="ECO:0007669"/>
    <property type="project" value="UniProtKB-UniRule"/>
</dbReference>
<dbReference type="GO" id="GO:0006310">
    <property type="term" value="P:DNA recombination"/>
    <property type="evidence" value="ECO:0007669"/>
    <property type="project" value="UniProtKB-UniRule"/>
</dbReference>
<dbReference type="CDD" id="cd00397">
    <property type="entry name" value="DNA_BRE_C"/>
    <property type="match status" value="1"/>
</dbReference>
<dbReference type="Gene3D" id="1.10.150.130">
    <property type="match status" value="1"/>
</dbReference>
<dbReference type="Gene3D" id="1.10.443.10">
    <property type="entry name" value="Intergrase catalytic core"/>
    <property type="match status" value="1"/>
</dbReference>
<dbReference type="HAMAP" id="MF_01816">
    <property type="entry name" value="Recomb_XerS"/>
    <property type="match status" value="1"/>
</dbReference>
<dbReference type="InterPro" id="IPR044068">
    <property type="entry name" value="CB"/>
</dbReference>
<dbReference type="InterPro" id="IPR011010">
    <property type="entry name" value="DNA_brk_join_enz"/>
</dbReference>
<dbReference type="InterPro" id="IPR013762">
    <property type="entry name" value="Integrase-like_cat_sf"/>
</dbReference>
<dbReference type="InterPro" id="IPR002104">
    <property type="entry name" value="Integrase_catalytic"/>
</dbReference>
<dbReference type="InterPro" id="IPR010998">
    <property type="entry name" value="Integrase_recombinase_N"/>
</dbReference>
<dbReference type="InterPro" id="IPR004107">
    <property type="entry name" value="Integrase_SAM-like_N"/>
</dbReference>
<dbReference type="InterPro" id="IPR023670">
    <property type="entry name" value="Recomb_XerS"/>
</dbReference>
<dbReference type="InterPro" id="IPR050090">
    <property type="entry name" value="Tyrosine_recombinase_XerCD"/>
</dbReference>
<dbReference type="NCBIfam" id="NF003462">
    <property type="entry name" value="PRK05084.1"/>
    <property type="match status" value="1"/>
</dbReference>
<dbReference type="PANTHER" id="PTHR30349">
    <property type="entry name" value="PHAGE INTEGRASE-RELATED"/>
    <property type="match status" value="1"/>
</dbReference>
<dbReference type="PANTHER" id="PTHR30349:SF77">
    <property type="entry name" value="TYROSINE RECOMBINASE XERC"/>
    <property type="match status" value="1"/>
</dbReference>
<dbReference type="Pfam" id="PF02899">
    <property type="entry name" value="Phage_int_SAM_1"/>
    <property type="match status" value="1"/>
</dbReference>
<dbReference type="Pfam" id="PF00589">
    <property type="entry name" value="Phage_integrase"/>
    <property type="match status" value="1"/>
</dbReference>
<dbReference type="SUPFAM" id="SSF56349">
    <property type="entry name" value="DNA breaking-rejoining enzymes"/>
    <property type="match status" value="1"/>
</dbReference>
<dbReference type="PROSITE" id="PS51900">
    <property type="entry name" value="CB"/>
    <property type="match status" value="1"/>
</dbReference>
<dbReference type="PROSITE" id="PS51898">
    <property type="entry name" value="TYR_RECOMBINASE"/>
    <property type="match status" value="1"/>
</dbReference>
<gene>
    <name evidence="1" type="primary">xerS</name>
    <name type="ordered locus">MGAS9429_Spy1015</name>
</gene>
<comment type="function">
    <text evidence="1">Site-specific tyrosine recombinase, which acts by catalyzing the cutting and rejoining of the recombining DNA molecules. Essential to convert dimers of the bacterial chromosome into monomers to permit their segregation at cell division.</text>
</comment>
<comment type="activity regulation">
    <text evidence="1">FtsK is required for recombination.</text>
</comment>
<comment type="subcellular location">
    <subcellularLocation>
        <location evidence="1">Cytoplasm</location>
    </subcellularLocation>
</comment>
<comment type="similarity">
    <text evidence="1">Belongs to the 'phage' integrase family. XerS subfamily.</text>
</comment>
<comment type="sequence caution" evidence="4">
    <conflict type="erroneous initiation">
        <sequence resource="EMBL-CDS" id="ABF32202"/>
    </conflict>
</comment>
<sequence length="356" mass="41459">MRRELLLEKIETYKAIMPWYVLDYYQSKLAVPYSFTTLYEYLKEYKRFFDWLMDADLTQAPKIADIDLSTLEHLTKKDLEAFVLYLRERPSLNTYSTKEGLSQTTINRTLSALSSLYKYLTEEVENDQGEPYFYRNVMKKVSTKKKKETLASRAENIKQKLFLGDETLAFLDYVDKEYEQKLSNRAKSSFRKNKERDLAIIALLLASGVRLSEAVNLDLKDVNLNMMIIEVIRKGGKRDSVNVAGFAKGYLESYLAVRQRRYKAEKQDLAFFLTEYRGVPNRMDASSIEKMVGKYSEDFKIRVTPHKLRHTLATRLYDATKSQVLVSHQLGHSSTQVTDLYTHIVNDEQKTALDNL</sequence>
<protein>
    <recommendedName>
        <fullName evidence="1">Tyrosine recombinase XerS</fullName>
    </recommendedName>
</protein>
<reference key="1">
    <citation type="journal article" date="2006" name="Proc. Natl. Acad. Sci. U.S.A.">
        <title>Molecular genetic anatomy of inter- and intraserotype variation in the human bacterial pathogen group A Streptococcus.</title>
        <authorList>
            <person name="Beres S.B."/>
            <person name="Richter E.W."/>
            <person name="Nagiec M.J."/>
            <person name="Sumby P."/>
            <person name="Porcella S.F."/>
            <person name="DeLeo F.R."/>
            <person name="Musser J.M."/>
        </authorList>
    </citation>
    <scope>NUCLEOTIDE SEQUENCE [LARGE SCALE GENOMIC DNA]</scope>
    <source>
        <strain>MGAS9429</strain>
    </source>
</reference>
<name>XERS_STRPC</name>
<evidence type="ECO:0000255" key="1">
    <source>
        <dbReference type="HAMAP-Rule" id="MF_01816"/>
    </source>
</evidence>
<evidence type="ECO:0000255" key="2">
    <source>
        <dbReference type="PROSITE-ProRule" id="PRU01246"/>
    </source>
</evidence>
<evidence type="ECO:0000255" key="3">
    <source>
        <dbReference type="PROSITE-ProRule" id="PRU01248"/>
    </source>
</evidence>
<evidence type="ECO:0000305" key="4"/>